<protein>
    <recommendedName>
        <fullName evidence="1">Dual-specificity RNA methyltransferase RlmN</fullName>
        <ecNumber evidence="1">2.1.1.192</ecNumber>
    </recommendedName>
    <alternativeName>
        <fullName evidence="1">23S rRNA (adenine(2503)-C(2))-methyltransferase</fullName>
    </alternativeName>
    <alternativeName>
        <fullName evidence="1">23S rRNA m2A2503 methyltransferase</fullName>
    </alternativeName>
    <alternativeName>
        <fullName evidence="1">Ribosomal RNA large subunit methyltransferase N</fullName>
    </alternativeName>
    <alternativeName>
        <fullName evidence="1">tRNA (adenine(37)-C(2))-methyltransferase</fullName>
    </alternativeName>
    <alternativeName>
        <fullName evidence="1">tRNA m2A37 methyltransferase</fullName>
    </alternativeName>
</protein>
<gene>
    <name evidence="1" type="primary">rlmN</name>
    <name type="ordered locus">WS0062</name>
</gene>
<organism>
    <name type="scientific">Wolinella succinogenes (strain ATCC 29543 / DSM 1740 / CCUG 13145 / JCM 31913 / LMG 7466 / NCTC 11488 / FDC 602W)</name>
    <name type="common">Vibrio succinogenes</name>
    <dbReference type="NCBI Taxonomy" id="273121"/>
    <lineage>
        <taxon>Bacteria</taxon>
        <taxon>Pseudomonadati</taxon>
        <taxon>Campylobacterota</taxon>
        <taxon>Epsilonproteobacteria</taxon>
        <taxon>Campylobacterales</taxon>
        <taxon>Helicobacteraceae</taxon>
        <taxon>Wolinella</taxon>
    </lineage>
</organism>
<keyword id="KW-0004">4Fe-4S</keyword>
<keyword id="KW-0963">Cytoplasm</keyword>
<keyword id="KW-1015">Disulfide bond</keyword>
<keyword id="KW-0408">Iron</keyword>
<keyword id="KW-0411">Iron-sulfur</keyword>
<keyword id="KW-0479">Metal-binding</keyword>
<keyword id="KW-0489">Methyltransferase</keyword>
<keyword id="KW-1185">Reference proteome</keyword>
<keyword id="KW-0698">rRNA processing</keyword>
<keyword id="KW-0949">S-adenosyl-L-methionine</keyword>
<keyword id="KW-0808">Transferase</keyword>
<keyword id="KW-0819">tRNA processing</keyword>
<comment type="function">
    <text evidence="1">Specifically methylates position 2 of adenine 2503 in 23S rRNA and position 2 of adenine 37 in tRNAs. m2A2503 modification seems to play a crucial role in the proofreading step occurring at the peptidyl transferase center and thus would serve to optimize ribosomal fidelity.</text>
</comment>
<comment type="catalytic activity">
    <reaction evidence="1">
        <text>adenosine(2503) in 23S rRNA + 2 reduced [2Fe-2S]-[ferredoxin] + 2 S-adenosyl-L-methionine = 2-methyladenosine(2503) in 23S rRNA + 5'-deoxyadenosine + L-methionine + 2 oxidized [2Fe-2S]-[ferredoxin] + S-adenosyl-L-homocysteine</text>
        <dbReference type="Rhea" id="RHEA:42916"/>
        <dbReference type="Rhea" id="RHEA-COMP:10000"/>
        <dbReference type="Rhea" id="RHEA-COMP:10001"/>
        <dbReference type="Rhea" id="RHEA-COMP:10152"/>
        <dbReference type="Rhea" id="RHEA-COMP:10282"/>
        <dbReference type="ChEBI" id="CHEBI:17319"/>
        <dbReference type="ChEBI" id="CHEBI:33737"/>
        <dbReference type="ChEBI" id="CHEBI:33738"/>
        <dbReference type="ChEBI" id="CHEBI:57844"/>
        <dbReference type="ChEBI" id="CHEBI:57856"/>
        <dbReference type="ChEBI" id="CHEBI:59789"/>
        <dbReference type="ChEBI" id="CHEBI:74411"/>
        <dbReference type="ChEBI" id="CHEBI:74497"/>
        <dbReference type="EC" id="2.1.1.192"/>
    </reaction>
</comment>
<comment type="catalytic activity">
    <reaction evidence="1">
        <text>adenosine(37) in tRNA + 2 reduced [2Fe-2S]-[ferredoxin] + 2 S-adenosyl-L-methionine = 2-methyladenosine(37) in tRNA + 5'-deoxyadenosine + L-methionine + 2 oxidized [2Fe-2S]-[ferredoxin] + S-adenosyl-L-homocysteine</text>
        <dbReference type="Rhea" id="RHEA:43332"/>
        <dbReference type="Rhea" id="RHEA-COMP:10000"/>
        <dbReference type="Rhea" id="RHEA-COMP:10001"/>
        <dbReference type="Rhea" id="RHEA-COMP:10162"/>
        <dbReference type="Rhea" id="RHEA-COMP:10485"/>
        <dbReference type="ChEBI" id="CHEBI:17319"/>
        <dbReference type="ChEBI" id="CHEBI:33737"/>
        <dbReference type="ChEBI" id="CHEBI:33738"/>
        <dbReference type="ChEBI" id="CHEBI:57844"/>
        <dbReference type="ChEBI" id="CHEBI:57856"/>
        <dbReference type="ChEBI" id="CHEBI:59789"/>
        <dbReference type="ChEBI" id="CHEBI:74411"/>
        <dbReference type="ChEBI" id="CHEBI:74497"/>
        <dbReference type="EC" id="2.1.1.192"/>
    </reaction>
</comment>
<comment type="cofactor">
    <cofactor evidence="1">
        <name>[4Fe-4S] cluster</name>
        <dbReference type="ChEBI" id="CHEBI:49883"/>
    </cofactor>
    <text evidence="1">Binds 1 [4Fe-4S] cluster. The cluster is coordinated with 3 cysteines and an exchangeable S-adenosyl-L-methionine.</text>
</comment>
<comment type="subcellular location">
    <subcellularLocation>
        <location evidence="1">Cytoplasm</location>
    </subcellularLocation>
</comment>
<comment type="miscellaneous">
    <text evidence="1">Reaction proceeds by a ping-pong mechanism involving intermediate methylation of a conserved cysteine residue.</text>
</comment>
<comment type="similarity">
    <text evidence="1">Belongs to the radical SAM superfamily. RlmN family.</text>
</comment>
<name>RLMN_WOLSU</name>
<sequence>MLNIYDYTLEELKRRLHPPFRAKQLYHWLYHRYEEEFEKMHNLSKEIRQKLTQDYSATLTKVVREEVSEDGSRKYLFQTHDGLTYEAVLLKMKEKKEDEEGRIVEGEKYTICVSSQVGCKVGCSFCFTAKGGFVRNLSAGEIVYQIVALKRLNALAPEKRVNIVYMGMGEPLDNFENLIQAIRILSELDGLSISTKRQTISTSGIAPKIEKLGALDLGVQLAISLHAVDDELRTRLIPMNKAYNIASIIEAVRRFPIDSRKRVMFEYLVIKGVNDDEKSAKTLLKLLNGIKSKVNLIYFNPHEGSEFERPLESKMVAFQKYLTDRGLLCTIRESKGIDISAACGQLREKIIKEENCGNR</sequence>
<reference key="1">
    <citation type="journal article" date="2003" name="Proc. Natl. Acad. Sci. U.S.A.">
        <title>Complete genome sequence and analysis of Wolinella succinogenes.</title>
        <authorList>
            <person name="Baar C."/>
            <person name="Eppinger M."/>
            <person name="Raddatz G."/>
            <person name="Simon J."/>
            <person name="Lanz C."/>
            <person name="Klimmek O."/>
            <person name="Nandakumar R."/>
            <person name="Gross R."/>
            <person name="Rosinus A."/>
            <person name="Keller H."/>
            <person name="Jagtap P."/>
            <person name="Linke B."/>
            <person name="Meyer F."/>
            <person name="Lederer H."/>
            <person name="Schuster S.C."/>
        </authorList>
    </citation>
    <scope>NUCLEOTIDE SEQUENCE [LARGE SCALE GENOMIC DNA]</scope>
    <source>
        <strain>ATCC 29543 / DSM 1740 / CCUG 13145 / JCM 31913 / LMG 7466 / NCTC 11488 / FDC 602W</strain>
    </source>
</reference>
<accession>Q7MSW1</accession>
<feature type="chain" id="PRO_0000350523" description="Dual-specificity RNA methyltransferase RlmN">
    <location>
        <begin position="1"/>
        <end position="359"/>
    </location>
</feature>
<feature type="domain" description="Radical SAM core" evidence="2">
    <location>
        <begin position="105"/>
        <end position="338"/>
    </location>
</feature>
<feature type="active site" description="Proton acceptor" evidence="1">
    <location>
        <position position="86"/>
    </location>
</feature>
<feature type="active site" description="S-methylcysteine intermediate" evidence="1">
    <location>
        <position position="343"/>
    </location>
</feature>
<feature type="binding site" evidence="1">
    <location>
        <position position="119"/>
    </location>
    <ligand>
        <name>[4Fe-4S] cluster</name>
        <dbReference type="ChEBI" id="CHEBI:49883"/>
        <note>4Fe-4S-S-AdoMet</note>
    </ligand>
</feature>
<feature type="binding site" evidence="1">
    <location>
        <position position="123"/>
    </location>
    <ligand>
        <name>[4Fe-4S] cluster</name>
        <dbReference type="ChEBI" id="CHEBI:49883"/>
        <note>4Fe-4S-S-AdoMet</note>
    </ligand>
</feature>
<feature type="binding site" evidence="1">
    <location>
        <position position="126"/>
    </location>
    <ligand>
        <name>[4Fe-4S] cluster</name>
        <dbReference type="ChEBI" id="CHEBI:49883"/>
        <note>4Fe-4S-S-AdoMet</note>
    </ligand>
</feature>
<feature type="binding site" evidence="1">
    <location>
        <begin position="169"/>
        <end position="170"/>
    </location>
    <ligand>
        <name>S-adenosyl-L-methionine</name>
        <dbReference type="ChEBI" id="CHEBI:59789"/>
    </ligand>
</feature>
<feature type="binding site" evidence="1">
    <location>
        <position position="201"/>
    </location>
    <ligand>
        <name>S-adenosyl-L-methionine</name>
        <dbReference type="ChEBI" id="CHEBI:59789"/>
    </ligand>
</feature>
<feature type="binding site" evidence="1">
    <location>
        <begin position="224"/>
        <end position="226"/>
    </location>
    <ligand>
        <name>S-adenosyl-L-methionine</name>
        <dbReference type="ChEBI" id="CHEBI:59789"/>
    </ligand>
</feature>
<feature type="binding site" evidence="1">
    <location>
        <position position="300"/>
    </location>
    <ligand>
        <name>S-adenosyl-L-methionine</name>
        <dbReference type="ChEBI" id="CHEBI:59789"/>
    </ligand>
</feature>
<feature type="disulfide bond" description="(transient)" evidence="1">
    <location>
        <begin position="112"/>
        <end position="343"/>
    </location>
</feature>
<evidence type="ECO:0000255" key="1">
    <source>
        <dbReference type="HAMAP-Rule" id="MF_01849"/>
    </source>
</evidence>
<evidence type="ECO:0000255" key="2">
    <source>
        <dbReference type="PROSITE-ProRule" id="PRU01266"/>
    </source>
</evidence>
<dbReference type="EC" id="2.1.1.192" evidence="1"/>
<dbReference type="EMBL" id="BX571657">
    <property type="protein sequence ID" value="CAE09231.1"/>
    <property type="molecule type" value="Genomic_DNA"/>
</dbReference>
<dbReference type="RefSeq" id="WP_011138031.1">
    <property type="nucleotide sequence ID" value="NC_005090.1"/>
</dbReference>
<dbReference type="SMR" id="Q7MSW1"/>
<dbReference type="STRING" id="273121.WS0062"/>
<dbReference type="KEGG" id="wsu:WS0062"/>
<dbReference type="eggNOG" id="COG0820">
    <property type="taxonomic scope" value="Bacteria"/>
</dbReference>
<dbReference type="HOGENOM" id="CLU_029101_2_0_7"/>
<dbReference type="Proteomes" id="UP000000422">
    <property type="component" value="Chromosome"/>
</dbReference>
<dbReference type="GO" id="GO:0005737">
    <property type="term" value="C:cytoplasm"/>
    <property type="evidence" value="ECO:0007669"/>
    <property type="project" value="UniProtKB-SubCell"/>
</dbReference>
<dbReference type="GO" id="GO:0051539">
    <property type="term" value="F:4 iron, 4 sulfur cluster binding"/>
    <property type="evidence" value="ECO:0007669"/>
    <property type="project" value="UniProtKB-UniRule"/>
</dbReference>
<dbReference type="GO" id="GO:0046872">
    <property type="term" value="F:metal ion binding"/>
    <property type="evidence" value="ECO:0007669"/>
    <property type="project" value="UniProtKB-KW"/>
</dbReference>
<dbReference type="GO" id="GO:0070040">
    <property type="term" value="F:rRNA (adenine(2503)-C2-)-methyltransferase activity"/>
    <property type="evidence" value="ECO:0007669"/>
    <property type="project" value="UniProtKB-UniRule"/>
</dbReference>
<dbReference type="GO" id="GO:0019843">
    <property type="term" value="F:rRNA binding"/>
    <property type="evidence" value="ECO:0007669"/>
    <property type="project" value="UniProtKB-UniRule"/>
</dbReference>
<dbReference type="GO" id="GO:0002935">
    <property type="term" value="F:tRNA (adenine(37)-C2)-methyltransferase activity"/>
    <property type="evidence" value="ECO:0007669"/>
    <property type="project" value="UniProtKB-UniRule"/>
</dbReference>
<dbReference type="GO" id="GO:0000049">
    <property type="term" value="F:tRNA binding"/>
    <property type="evidence" value="ECO:0007669"/>
    <property type="project" value="UniProtKB-UniRule"/>
</dbReference>
<dbReference type="GO" id="GO:0070475">
    <property type="term" value="P:rRNA base methylation"/>
    <property type="evidence" value="ECO:0007669"/>
    <property type="project" value="UniProtKB-UniRule"/>
</dbReference>
<dbReference type="GO" id="GO:0030488">
    <property type="term" value="P:tRNA methylation"/>
    <property type="evidence" value="ECO:0007669"/>
    <property type="project" value="UniProtKB-UniRule"/>
</dbReference>
<dbReference type="CDD" id="cd01335">
    <property type="entry name" value="Radical_SAM"/>
    <property type="match status" value="1"/>
</dbReference>
<dbReference type="FunFam" id="3.20.20.70:FF:000014">
    <property type="entry name" value="Probable dual-specificity RNA methyltransferase RlmN"/>
    <property type="match status" value="1"/>
</dbReference>
<dbReference type="Gene3D" id="1.10.150.530">
    <property type="match status" value="1"/>
</dbReference>
<dbReference type="Gene3D" id="3.20.20.70">
    <property type="entry name" value="Aldolase class I"/>
    <property type="match status" value="1"/>
</dbReference>
<dbReference type="HAMAP" id="MF_01849">
    <property type="entry name" value="RNA_methyltr_RlmN"/>
    <property type="match status" value="1"/>
</dbReference>
<dbReference type="InterPro" id="IPR013785">
    <property type="entry name" value="Aldolase_TIM"/>
</dbReference>
<dbReference type="InterPro" id="IPR006638">
    <property type="entry name" value="Elp3/MiaA/NifB-like_rSAM"/>
</dbReference>
<dbReference type="InterPro" id="IPR040072">
    <property type="entry name" value="Methyltransferase_A"/>
</dbReference>
<dbReference type="InterPro" id="IPR048641">
    <property type="entry name" value="RlmN_N"/>
</dbReference>
<dbReference type="InterPro" id="IPR027492">
    <property type="entry name" value="RNA_MTrfase_RlmN"/>
</dbReference>
<dbReference type="InterPro" id="IPR004383">
    <property type="entry name" value="rRNA_lsu_MTrfase_RlmN/Cfr"/>
</dbReference>
<dbReference type="InterPro" id="IPR007197">
    <property type="entry name" value="rSAM"/>
</dbReference>
<dbReference type="NCBIfam" id="TIGR00048">
    <property type="entry name" value="rRNA_mod_RlmN"/>
    <property type="match status" value="1"/>
</dbReference>
<dbReference type="PANTHER" id="PTHR30544">
    <property type="entry name" value="23S RRNA METHYLTRANSFERASE"/>
    <property type="match status" value="1"/>
</dbReference>
<dbReference type="PANTHER" id="PTHR30544:SF5">
    <property type="entry name" value="RADICAL SAM CORE DOMAIN-CONTAINING PROTEIN"/>
    <property type="match status" value="1"/>
</dbReference>
<dbReference type="Pfam" id="PF04055">
    <property type="entry name" value="Radical_SAM"/>
    <property type="match status" value="1"/>
</dbReference>
<dbReference type="Pfam" id="PF21016">
    <property type="entry name" value="RlmN_N"/>
    <property type="match status" value="1"/>
</dbReference>
<dbReference type="PIRSF" id="PIRSF006004">
    <property type="entry name" value="CHP00048"/>
    <property type="match status" value="1"/>
</dbReference>
<dbReference type="SFLD" id="SFLDF00275">
    <property type="entry name" value="adenosine_C2_methyltransferase"/>
    <property type="match status" value="1"/>
</dbReference>
<dbReference type="SFLD" id="SFLDS00029">
    <property type="entry name" value="Radical_SAM"/>
    <property type="match status" value="1"/>
</dbReference>
<dbReference type="SMART" id="SM00729">
    <property type="entry name" value="Elp3"/>
    <property type="match status" value="1"/>
</dbReference>
<dbReference type="SUPFAM" id="SSF102114">
    <property type="entry name" value="Radical SAM enzymes"/>
    <property type="match status" value="1"/>
</dbReference>
<dbReference type="PROSITE" id="PS51918">
    <property type="entry name" value="RADICAL_SAM"/>
    <property type="match status" value="1"/>
</dbReference>
<proteinExistence type="inferred from homology"/>